<comment type="function">
    <text evidence="1">The RuvA-RuvB-RuvC complex processes Holliday junction (HJ) DNA during genetic recombination and DNA repair, while the RuvA-RuvB complex plays an important role in the rescue of blocked DNA replication forks via replication fork reversal (RFR). RuvA specifically binds to HJ cruciform DNA, conferring on it an open structure. The RuvB hexamer acts as an ATP-dependent pump, pulling dsDNA into and through the RuvAB complex. HJ branch migration allows RuvC to scan DNA until it finds its consensus sequence, where it cleaves and resolves the cruciform DNA.</text>
</comment>
<comment type="subunit">
    <text evidence="1">Homotetramer. Forms an RuvA(8)-RuvB(12)-Holliday junction (HJ) complex. HJ DNA is sandwiched between 2 RuvA tetramers; dsDNA enters through RuvA and exits via RuvB. An RuvB hexamer assembles on each DNA strand where it exits the tetramer. Each RuvB hexamer is contacted by two RuvA subunits (via domain III) on 2 adjacent RuvB subunits; this complex drives branch migration. In the full resolvosome a probable DNA-RuvA(4)-RuvB(12)-RuvC(2) complex forms which resolves the HJ.</text>
</comment>
<comment type="subcellular location">
    <subcellularLocation>
        <location evidence="1">Cytoplasm</location>
    </subcellularLocation>
</comment>
<comment type="domain">
    <text evidence="1">Has three domains with a flexible linker between the domains II and III and assumes an 'L' shape. Domain III is highly mobile and contacts RuvB.</text>
</comment>
<comment type="similarity">
    <text evidence="1">Belongs to the RuvA family.</text>
</comment>
<evidence type="ECO:0000255" key="1">
    <source>
        <dbReference type="HAMAP-Rule" id="MF_00031"/>
    </source>
</evidence>
<accession>B1I8F7</accession>
<organism>
    <name type="scientific">Streptococcus pneumoniae (strain Hungary19A-6)</name>
    <dbReference type="NCBI Taxonomy" id="487214"/>
    <lineage>
        <taxon>Bacteria</taxon>
        <taxon>Bacillati</taxon>
        <taxon>Bacillota</taxon>
        <taxon>Bacilli</taxon>
        <taxon>Lactobacillales</taxon>
        <taxon>Streptococcaceae</taxon>
        <taxon>Streptococcus</taxon>
    </lineage>
</organism>
<proteinExistence type="inferred from homology"/>
<feature type="chain" id="PRO_1000090376" description="Holliday junction branch migration complex subunit RuvA">
    <location>
        <begin position="1"/>
        <end position="197"/>
    </location>
</feature>
<feature type="region of interest" description="Domain I" evidence="1">
    <location>
        <begin position="1"/>
        <end position="63"/>
    </location>
</feature>
<feature type="region of interest" description="Domain II" evidence="1">
    <location>
        <begin position="64"/>
        <end position="142"/>
    </location>
</feature>
<feature type="region of interest" description="Flexible linker" evidence="1">
    <location>
        <begin position="143"/>
        <end position="147"/>
    </location>
</feature>
<feature type="region of interest" description="Domain III" evidence="1">
    <location>
        <begin position="148"/>
        <end position="197"/>
    </location>
</feature>
<reference key="1">
    <citation type="journal article" date="2010" name="Genome Biol.">
        <title>Structure and dynamics of the pan-genome of Streptococcus pneumoniae and closely related species.</title>
        <authorList>
            <person name="Donati C."/>
            <person name="Hiller N.L."/>
            <person name="Tettelin H."/>
            <person name="Muzzi A."/>
            <person name="Croucher N.J."/>
            <person name="Angiuoli S.V."/>
            <person name="Oggioni M."/>
            <person name="Dunning Hotopp J.C."/>
            <person name="Hu F.Z."/>
            <person name="Riley D.R."/>
            <person name="Covacci A."/>
            <person name="Mitchell T.J."/>
            <person name="Bentley S.D."/>
            <person name="Kilian M."/>
            <person name="Ehrlich G.D."/>
            <person name="Rappuoli R."/>
            <person name="Moxon E.R."/>
            <person name="Masignani V."/>
        </authorList>
    </citation>
    <scope>NUCLEOTIDE SEQUENCE [LARGE SCALE GENOMIC DNA]</scope>
    <source>
        <strain>Hungary19A-6</strain>
    </source>
</reference>
<dbReference type="EMBL" id="CP000936">
    <property type="protein sequence ID" value="ACA35751.1"/>
    <property type="molecule type" value="Genomic_DNA"/>
</dbReference>
<dbReference type="RefSeq" id="WP_000271487.1">
    <property type="nucleotide sequence ID" value="NC_010380.1"/>
</dbReference>
<dbReference type="SMR" id="B1I8F7"/>
<dbReference type="KEGG" id="spv:SPH_0282"/>
<dbReference type="HOGENOM" id="CLU_087936_1_0_9"/>
<dbReference type="Proteomes" id="UP000002163">
    <property type="component" value="Chromosome"/>
</dbReference>
<dbReference type="GO" id="GO:0005737">
    <property type="term" value="C:cytoplasm"/>
    <property type="evidence" value="ECO:0007669"/>
    <property type="project" value="UniProtKB-SubCell"/>
</dbReference>
<dbReference type="GO" id="GO:0009379">
    <property type="term" value="C:Holliday junction helicase complex"/>
    <property type="evidence" value="ECO:0007669"/>
    <property type="project" value="InterPro"/>
</dbReference>
<dbReference type="GO" id="GO:0048476">
    <property type="term" value="C:Holliday junction resolvase complex"/>
    <property type="evidence" value="ECO:0007669"/>
    <property type="project" value="UniProtKB-UniRule"/>
</dbReference>
<dbReference type="GO" id="GO:0005524">
    <property type="term" value="F:ATP binding"/>
    <property type="evidence" value="ECO:0007669"/>
    <property type="project" value="InterPro"/>
</dbReference>
<dbReference type="GO" id="GO:0000400">
    <property type="term" value="F:four-way junction DNA binding"/>
    <property type="evidence" value="ECO:0007669"/>
    <property type="project" value="UniProtKB-UniRule"/>
</dbReference>
<dbReference type="GO" id="GO:0009378">
    <property type="term" value="F:four-way junction helicase activity"/>
    <property type="evidence" value="ECO:0007669"/>
    <property type="project" value="InterPro"/>
</dbReference>
<dbReference type="GO" id="GO:0006310">
    <property type="term" value="P:DNA recombination"/>
    <property type="evidence" value="ECO:0007669"/>
    <property type="project" value="UniProtKB-UniRule"/>
</dbReference>
<dbReference type="GO" id="GO:0006281">
    <property type="term" value="P:DNA repair"/>
    <property type="evidence" value="ECO:0007669"/>
    <property type="project" value="UniProtKB-UniRule"/>
</dbReference>
<dbReference type="CDD" id="cd14332">
    <property type="entry name" value="UBA_RuvA_C"/>
    <property type="match status" value="1"/>
</dbReference>
<dbReference type="Gene3D" id="1.10.150.20">
    <property type="entry name" value="5' to 3' exonuclease, C-terminal subdomain"/>
    <property type="match status" value="1"/>
</dbReference>
<dbReference type="Gene3D" id="1.10.8.10">
    <property type="entry name" value="DNA helicase RuvA subunit, C-terminal domain"/>
    <property type="match status" value="1"/>
</dbReference>
<dbReference type="Gene3D" id="2.40.50.140">
    <property type="entry name" value="Nucleic acid-binding proteins"/>
    <property type="match status" value="1"/>
</dbReference>
<dbReference type="HAMAP" id="MF_00031">
    <property type="entry name" value="DNA_HJ_migration_RuvA"/>
    <property type="match status" value="1"/>
</dbReference>
<dbReference type="InterPro" id="IPR013849">
    <property type="entry name" value="DNA_helicase_Holl-junc_RuvA_I"/>
</dbReference>
<dbReference type="InterPro" id="IPR003583">
    <property type="entry name" value="Hlx-hairpin-Hlx_DNA-bd_motif"/>
</dbReference>
<dbReference type="InterPro" id="IPR012340">
    <property type="entry name" value="NA-bd_OB-fold"/>
</dbReference>
<dbReference type="InterPro" id="IPR000085">
    <property type="entry name" value="RuvA"/>
</dbReference>
<dbReference type="InterPro" id="IPR010994">
    <property type="entry name" value="RuvA_2-like"/>
</dbReference>
<dbReference type="InterPro" id="IPR011114">
    <property type="entry name" value="RuvA_C"/>
</dbReference>
<dbReference type="InterPro" id="IPR036267">
    <property type="entry name" value="RuvA_C_sf"/>
</dbReference>
<dbReference type="NCBIfam" id="TIGR00084">
    <property type="entry name" value="ruvA"/>
    <property type="match status" value="1"/>
</dbReference>
<dbReference type="Pfam" id="PF14520">
    <property type="entry name" value="HHH_5"/>
    <property type="match status" value="1"/>
</dbReference>
<dbReference type="Pfam" id="PF07499">
    <property type="entry name" value="RuvA_C"/>
    <property type="match status" value="1"/>
</dbReference>
<dbReference type="Pfam" id="PF01330">
    <property type="entry name" value="RuvA_N"/>
    <property type="match status" value="1"/>
</dbReference>
<dbReference type="SMART" id="SM00278">
    <property type="entry name" value="HhH1"/>
    <property type="match status" value="2"/>
</dbReference>
<dbReference type="SUPFAM" id="SSF46929">
    <property type="entry name" value="DNA helicase RuvA subunit, C-terminal domain"/>
    <property type="match status" value="1"/>
</dbReference>
<dbReference type="SUPFAM" id="SSF50249">
    <property type="entry name" value="Nucleic acid-binding proteins"/>
    <property type="match status" value="1"/>
</dbReference>
<dbReference type="SUPFAM" id="SSF47781">
    <property type="entry name" value="RuvA domain 2-like"/>
    <property type="match status" value="1"/>
</dbReference>
<name>RUVA_STRPI</name>
<protein>
    <recommendedName>
        <fullName evidence="1">Holliday junction branch migration complex subunit RuvA</fullName>
    </recommendedName>
</protein>
<keyword id="KW-0963">Cytoplasm</keyword>
<keyword id="KW-0227">DNA damage</keyword>
<keyword id="KW-0233">DNA recombination</keyword>
<keyword id="KW-0234">DNA repair</keyword>
<keyword id="KW-0238">DNA-binding</keyword>
<gene>
    <name evidence="1" type="primary">ruvA</name>
    <name type="ordered locus">SPH_0282</name>
</gene>
<sequence length="197" mass="21606">MYAYLKGIITKITAKYIVLETNGIGYILHVANPYAYSGQVNQEAQIYVHQVVREDAHLLYGFRSEDEKKLFLSLISVSGIGPVSALAIIAADDNAGLVQAIETKNITYLTKFPKIGKKTAQQMVLDLEGKVVVAGDDLPAKVAVQASAENQELEEAMEAMLALGYKATELKKIKKFFEGTTDTAENYIKSALKMLVK</sequence>